<name>RNPH_RICB8</name>
<keyword id="KW-0548">Nucleotidyltransferase</keyword>
<keyword id="KW-0694">RNA-binding</keyword>
<keyword id="KW-0698">rRNA processing</keyword>
<keyword id="KW-0808">Transferase</keyword>
<keyword id="KW-0819">tRNA processing</keyword>
<keyword id="KW-0820">tRNA-binding</keyword>
<comment type="function">
    <text evidence="1">Phosphorolytic 3'-5' exoribonuclease that plays an important role in tRNA 3'-end maturation. Removes nucleotide residues following the 3'-CCA terminus of tRNAs; can also add nucleotides to the ends of RNA molecules by using nucleoside diphosphates as substrates, but this may not be physiologically important. Probably plays a role in initiation of 16S rRNA degradation (leading to ribosome degradation) during starvation.</text>
</comment>
<comment type="catalytic activity">
    <reaction evidence="1">
        <text>tRNA(n+1) + phosphate = tRNA(n) + a ribonucleoside 5'-diphosphate</text>
        <dbReference type="Rhea" id="RHEA:10628"/>
        <dbReference type="Rhea" id="RHEA-COMP:17343"/>
        <dbReference type="Rhea" id="RHEA-COMP:17344"/>
        <dbReference type="ChEBI" id="CHEBI:43474"/>
        <dbReference type="ChEBI" id="CHEBI:57930"/>
        <dbReference type="ChEBI" id="CHEBI:173114"/>
        <dbReference type="EC" id="2.7.7.56"/>
    </reaction>
</comment>
<comment type="subunit">
    <text evidence="1">Homohexameric ring arranged as a trimer of dimers.</text>
</comment>
<comment type="similarity">
    <text evidence="1">Belongs to the RNase PH family.</text>
</comment>
<organism>
    <name type="scientific">Rickettsia bellii (strain OSU 85-389)</name>
    <dbReference type="NCBI Taxonomy" id="391896"/>
    <lineage>
        <taxon>Bacteria</taxon>
        <taxon>Pseudomonadati</taxon>
        <taxon>Pseudomonadota</taxon>
        <taxon>Alphaproteobacteria</taxon>
        <taxon>Rickettsiales</taxon>
        <taxon>Rickettsiaceae</taxon>
        <taxon>Rickettsieae</taxon>
        <taxon>Rickettsia</taxon>
        <taxon>belli group</taxon>
    </lineage>
</organism>
<protein>
    <recommendedName>
        <fullName evidence="1">Ribonuclease PH</fullName>
        <shortName evidence="1">RNase PH</shortName>
        <ecNumber evidence="1">2.7.7.56</ecNumber>
    </recommendedName>
    <alternativeName>
        <fullName evidence="1">tRNA nucleotidyltransferase</fullName>
    </alternativeName>
</protein>
<feature type="chain" id="PRO_1000024870" description="Ribonuclease PH">
    <location>
        <begin position="1"/>
        <end position="239"/>
    </location>
</feature>
<feature type="binding site" evidence="1">
    <location>
        <position position="86"/>
    </location>
    <ligand>
        <name>phosphate</name>
        <dbReference type="ChEBI" id="CHEBI:43474"/>
        <note>substrate</note>
    </ligand>
</feature>
<feature type="binding site" evidence="1">
    <location>
        <begin position="124"/>
        <end position="126"/>
    </location>
    <ligand>
        <name>phosphate</name>
        <dbReference type="ChEBI" id="CHEBI:43474"/>
        <note>substrate</note>
    </ligand>
</feature>
<evidence type="ECO:0000255" key="1">
    <source>
        <dbReference type="HAMAP-Rule" id="MF_00564"/>
    </source>
</evidence>
<sequence>MRQSGRKSNQLRPISLELSPLINAEGSCLIKIGNTHVMCSASYDTTVPPFLRNQNRGWITAEYSMLPGSTSQRNKREAVQGKQSGRTQEIQRLIGRTMRSIIDLQKLGERQITIDCDVINADGGTRTAAITGSYVALHLAIRSLMKERILKVNPLINQVAAVSCGIYKDQPILDLDYLEDSDAEVDSNFVFAGNGNLIEIQGTAEKKPFSEEQFLEMLKLAKAGVAELFKLQNQVLLNL</sequence>
<accession>A8GW25</accession>
<dbReference type="EC" id="2.7.7.56" evidence="1"/>
<dbReference type="EMBL" id="CP000849">
    <property type="protein sequence ID" value="ABV79052.1"/>
    <property type="molecule type" value="Genomic_DNA"/>
</dbReference>
<dbReference type="RefSeq" id="WP_012151813.1">
    <property type="nucleotide sequence ID" value="NC_009883.1"/>
</dbReference>
<dbReference type="SMR" id="A8GW25"/>
<dbReference type="KEGG" id="rbo:A1I_03465"/>
<dbReference type="HOGENOM" id="CLU_050858_0_0_5"/>
<dbReference type="GO" id="GO:0000175">
    <property type="term" value="F:3'-5'-RNA exonuclease activity"/>
    <property type="evidence" value="ECO:0007669"/>
    <property type="project" value="UniProtKB-UniRule"/>
</dbReference>
<dbReference type="GO" id="GO:0000049">
    <property type="term" value="F:tRNA binding"/>
    <property type="evidence" value="ECO:0007669"/>
    <property type="project" value="UniProtKB-UniRule"/>
</dbReference>
<dbReference type="GO" id="GO:0009022">
    <property type="term" value="F:tRNA nucleotidyltransferase activity"/>
    <property type="evidence" value="ECO:0007669"/>
    <property type="project" value="UniProtKB-UniRule"/>
</dbReference>
<dbReference type="GO" id="GO:0016075">
    <property type="term" value="P:rRNA catabolic process"/>
    <property type="evidence" value="ECO:0007669"/>
    <property type="project" value="UniProtKB-UniRule"/>
</dbReference>
<dbReference type="GO" id="GO:0006364">
    <property type="term" value="P:rRNA processing"/>
    <property type="evidence" value="ECO:0007669"/>
    <property type="project" value="UniProtKB-KW"/>
</dbReference>
<dbReference type="GO" id="GO:0008033">
    <property type="term" value="P:tRNA processing"/>
    <property type="evidence" value="ECO:0007669"/>
    <property type="project" value="UniProtKB-UniRule"/>
</dbReference>
<dbReference type="CDD" id="cd11362">
    <property type="entry name" value="RNase_PH_bact"/>
    <property type="match status" value="1"/>
</dbReference>
<dbReference type="FunFam" id="3.30.230.70:FF:000003">
    <property type="entry name" value="Ribonuclease PH"/>
    <property type="match status" value="1"/>
</dbReference>
<dbReference type="Gene3D" id="3.30.230.70">
    <property type="entry name" value="GHMP Kinase, N-terminal domain"/>
    <property type="match status" value="1"/>
</dbReference>
<dbReference type="HAMAP" id="MF_00564">
    <property type="entry name" value="RNase_PH"/>
    <property type="match status" value="1"/>
</dbReference>
<dbReference type="InterPro" id="IPR001247">
    <property type="entry name" value="ExoRNase_PH_dom1"/>
</dbReference>
<dbReference type="InterPro" id="IPR015847">
    <property type="entry name" value="ExoRNase_PH_dom2"/>
</dbReference>
<dbReference type="InterPro" id="IPR036345">
    <property type="entry name" value="ExoRNase_PH_dom2_sf"/>
</dbReference>
<dbReference type="InterPro" id="IPR027408">
    <property type="entry name" value="PNPase/RNase_PH_dom_sf"/>
</dbReference>
<dbReference type="InterPro" id="IPR020568">
    <property type="entry name" value="Ribosomal_Su5_D2-typ_SF"/>
</dbReference>
<dbReference type="InterPro" id="IPR050080">
    <property type="entry name" value="RNase_PH"/>
</dbReference>
<dbReference type="InterPro" id="IPR002381">
    <property type="entry name" value="RNase_PH_bac-type"/>
</dbReference>
<dbReference type="InterPro" id="IPR018336">
    <property type="entry name" value="RNase_PH_CS"/>
</dbReference>
<dbReference type="NCBIfam" id="TIGR01966">
    <property type="entry name" value="RNasePH"/>
    <property type="match status" value="1"/>
</dbReference>
<dbReference type="PANTHER" id="PTHR11953">
    <property type="entry name" value="EXOSOME COMPLEX COMPONENT"/>
    <property type="match status" value="1"/>
</dbReference>
<dbReference type="PANTHER" id="PTHR11953:SF0">
    <property type="entry name" value="EXOSOME COMPLEX COMPONENT RRP41"/>
    <property type="match status" value="1"/>
</dbReference>
<dbReference type="Pfam" id="PF01138">
    <property type="entry name" value="RNase_PH"/>
    <property type="match status" value="1"/>
</dbReference>
<dbReference type="Pfam" id="PF03725">
    <property type="entry name" value="RNase_PH_C"/>
    <property type="match status" value="1"/>
</dbReference>
<dbReference type="SUPFAM" id="SSF55666">
    <property type="entry name" value="Ribonuclease PH domain 2-like"/>
    <property type="match status" value="1"/>
</dbReference>
<dbReference type="SUPFAM" id="SSF54211">
    <property type="entry name" value="Ribosomal protein S5 domain 2-like"/>
    <property type="match status" value="1"/>
</dbReference>
<dbReference type="PROSITE" id="PS01277">
    <property type="entry name" value="RIBONUCLEASE_PH"/>
    <property type="match status" value="1"/>
</dbReference>
<reference key="1">
    <citation type="submission" date="2007-09" db="EMBL/GenBank/DDBJ databases">
        <title>Complete genome sequencing of Rickettsia bellii.</title>
        <authorList>
            <person name="Madan A."/>
            <person name="Lee H."/>
            <person name="Madan A."/>
            <person name="Yoon J.-G."/>
            <person name="Ryu G.-Y."/>
            <person name="Dasch G."/>
            <person name="Ereemeva M."/>
        </authorList>
    </citation>
    <scope>NUCLEOTIDE SEQUENCE [LARGE SCALE GENOMIC DNA]</scope>
    <source>
        <strain>OSU 85-389</strain>
    </source>
</reference>
<proteinExistence type="inferred from homology"/>
<gene>
    <name evidence="1" type="primary">rph</name>
    <name type="ordered locus">A1I_03465</name>
</gene>